<keyword id="KW-0045">Antibiotic biosynthesis</keyword>
<keyword id="KW-0378">Hydrolase</keyword>
<organism>
    <name type="scientific">Curvularia clavata</name>
    <dbReference type="NCBI Taxonomy" id="95742"/>
    <lineage>
        <taxon>Eukaryota</taxon>
        <taxon>Fungi</taxon>
        <taxon>Dikarya</taxon>
        <taxon>Ascomycota</taxon>
        <taxon>Pezizomycotina</taxon>
        <taxon>Dothideomycetes</taxon>
        <taxon>Pleosporomycetidae</taxon>
        <taxon>Pleosporales</taxon>
        <taxon>Pleosporineae</taxon>
        <taxon>Pleosporaceae</taxon>
        <taxon>Curvularia</taxon>
    </lineage>
</organism>
<dbReference type="EC" id="3.5.1.4" evidence="9"/>
<dbReference type="EMBL" id="LC371755">
    <property type="protein sequence ID" value="BBC83958.1"/>
    <property type="molecule type" value="Genomic_DNA"/>
</dbReference>
<dbReference type="SMR" id="A0A348AXX5"/>
<dbReference type="VEuPathDB" id="FungiDB:yc1106_06629"/>
<dbReference type="GO" id="GO:0004040">
    <property type="term" value="F:amidase activity"/>
    <property type="evidence" value="ECO:0007669"/>
    <property type="project" value="UniProtKB-EC"/>
</dbReference>
<dbReference type="GO" id="GO:0017000">
    <property type="term" value="P:antibiotic biosynthetic process"/>
    <property type="evidence" value="ECO:0007669"/>
    <property type="project" value="UniProtKB-KW"/>
</dbReference>
<dbReference type="Gene3D" id="3.90.1300.10">
    <property type="entry name" value="Amidase signature (AS) domain"/>
    <property type="match status" value="1"/>
</dbReference>
<dbReference type="InterPro" id="IPR023631">
    <property type="entry name" value="Amidase_dom"/>
</dbReference>
<dbReference type="InterPro" id="IPR036928">
    <property type="entry name" value="AS_sf"/>
</dbReference>
<dbReference type="PANTHER" id="PTHR46072:SF2">
    <property type="entry name" value="AMIDASE (EUROFUNG)"/>
    <property type="match status" value="1"/>
</dbReference>
<dbReference type="PANTHER" id="PTHR46072">
    <property type="entry name" value="AMIDASE-RELATED-RELATED"/>
    <property type="match status" value="1"/>
</dbReference>
<dbReference type="Pfam" id="PF01425">
    <property type="entry name" value="Amidase"/>
    <property type="match status" value="1"/>
</dbReference>
<dbReference type="PIRSF" id="PIRSF001221">
    <property type="entry name" value="Amidase_fungi"/>
    <property type="match status" value="1"/>
</dbReference>
<dbReference type="SUPFAM" id="SSF75304">
    <property type="entry name" value="Amidase signature (AS) enzymes"/>
    <property type="match status" value="1"/>
</dbReference>
<accession>A0A348AXX5</accession>
<evidence type="ECO:0000250" key="1">
    <source>
        <dbReference type="UniProtKB" id="P97612"/>
    </source>
</evidence>
<evidence type="ECO:0000256" key="2">
    <source>
        <dbReference type="SAM" id="MobiDB-lite"/>
    </source>
</evidence>
<evidence type="ECO:0000269" key="3">
    <source>
    </source>
</evidence>
<evidence type="ECO:0000269" key="4">
    <source>
    </source>
</evidence>
<evidence type="ECO:0000303" key="5">
    <source>
    </source>
</evidence>
<evidence type="ECO:0000303" key="6">
    <source>
    </source>
</evidence>
<evidence type="ECO:0000305" key="7"/>
<evidence type="ECO:0000305" key="8">
    <source>
    </source>
</evidence>
<evidence type="ECO:0000305" key="9">
    <source>
    </source>
</evidence>
<proteinExistence type="evidence at transcript level"/>
<protein>
    <recommendedName>
        <fullName evidence="6">Putative amidase kk1C</fullName>
        <ecNumber evidence="9">3.5.1.4</ecNumber>
    </recommendedName>
    <alternativeName>
        <fullName evidence="6">KK-1 biosynthesis cluster protein C</fullName>
    </alternativeName>
</protein>
<name>KK1C_CURCL</name>
<gene>
    <name evidence="6" type="primary">kk1C</name>
    <name evidence="5" type="synonym">TR02</name>
    <name type="ORF">TRAF068002</name>
</gene>
<sequence>MTEPTWKTVASEKQQQRESKIPSEWQIPKSSHPAPEVTFVQDFPAKSGMFTNRELQLTAATASDVTAKISTGEWTAVEVTTAVCKRAAVAQQLLNCVTEICFDQAIARAKELDAYFEKEGKTVGPLHGLPISFKDQFNVKGFDSTIGYCSYASKPATADSTLVKLLVKAGAIIYVKSNVPITLMMGESFNNIFGRTLNPRNRELTTGGSSGGEAALVTFCASFLGVGTDIGGSLRIPCSFTGLYGLRPSHGRVSYQHVQNTLLGQEAVRSCAGPMCRAPEDIRLFMSSLAAQQPWLWDPQSLPLPWRAEEEVLPKKLCFGFALGDGHVGPKKLKQAGHAVINFNLTEGKEVNEIMNKMFTADGGAEFQRDTDATGEPLPPTVEYWLGHSSQIKASTVSETWKNQHKKALLAQKFLEKWQATKGRTGTSRPIDGLIMPSTPFPASRHGSGWPWHFGDLSALLDLTTGVFPVTRVNLEKDAVPPSWTPMSVKDKEAMDYYEKPENHENALVGLQLIGRRLEEEKVTAMLTLIRNVLEVDY</sequence>
<feature type="chain" id="PRO_0000450434" description="Putative amidase kk1C">
    <location>
        <begin position="1"/>
        <end position="538"/>
    </location>
</feature>
<feature type="region of interest" description="Disordered" evidence="2">
    <location>
        <begin position="1"/>
        <end position="32"/>
    </location>
</feature>
<feature type="active site" description="Charge relay system" evidence="1">
    <location>
        <position position="134"/>
    </location>
</feature>
<feature type="active site" description="Charge relay system" evidence="1">
    <location>
        <position position="209"/>
    </location>
</feature>
<feature type="active site" description="Acyl-ester intermediate" evidence="1">
    <location>
        <position position="233"/>
    </location>
</feature>
<comment type="function">
    <text evidence="3 4 9">Putative amidase; part of the gene cluster that mediates the biosynthesis of KK-1, a novel cyclic depsipeptide with 10 residues which is a promising active compound with high activity against many plant pathogens, especially Botrytis cinerea (PubMed:29686660, PubMed:37746209). The role of kk1C in KK-1 biosynthesis has still to be determined (Probable). The nonribosomal peptide synthetase (NRPS) kk1B catalyzes the elongation and cyclization of the decapeptide chain composed of 1 D-lactic acid residue (D-Lac), 1 pipecolic acid residue (Pip), 1 aspartic acid residue (Asp), 1 isoleucine residue (Ile), 1 glycine residue (Gly), 1 tyrosine residue (Tyr) and 4 valine residues (Val). The Asp, Ile and 3 Val residues are N-methylated by the 5 methyltransferase domains from the NRPS (found in modules 3, 5, 6, 7 and 9), whereas the Tyr residue is O-methylated by the cluster encoded O-methyltransferase kk1A. The thioesterase kk1J is likely to be involved in the corrective mechanism of peptide chain synthesis. The D-lactate dehydrogenase kk1H is involved in the synthesis of D-lactic acid from pyruvic acid, which is recognized by the A domain of the first kk1B module. The pyrroline-5-carboxylate reductase kk1I is involved in the synthesis of the L-pipecolic acid residue of KK-1 from delta-1-pyrroline-5-carboxylate (P5C), a metabolic intermediate of lysine. It is still unclear how kk1C and kk1D are involved in the production of KK-1 (Probable).</text>
</comment>
<comment type="catalytic activity">
    <reaction evidence="8">
        <text>a monocarboxylic acid amide + H2O = a monocarboxylate + NH4(+)</text>
        <dbReference type="Rhea" id="RHEA:12020"/>
        <dbReference type="ChEBI" id="CHEBI:15377"/>
        <dbReference type="ChEBI" id="CHEBI:28938"/>
        <dbReference type="ChEBI" id="CHEBI:35757"/>
        <dbReference type="ChEBI" id="CHEBI:83628"/>
        <dbReference type="EC" id="3.5.1.4"/>
    </reaction>
</comment>
<comment type="pathway">
    <text evidence="3 4">Secondary metabolite biosynthesis.</text>
</comment>
<comment type="induction">
    <text evidence="4">Expression is positively regulated by the KK-1 cluster-specific transcription factor kk1F.</text>
</comment>
<comment type="disruption phenotype">
    <text evidence="4">Decreases significantly the production of KK-1.</text>
</comment>
<comment type="similarity">
    <text evidence="7">Belongs to the amidase family.</text>
</comment>
<reference key="1">
    <citation type="journal article" date="2018" name="Front. Microbiol.">
        <title>Heterologous production of a novel cyclic peptide compound, KK-1, in Aspergillus oryzae.</title>
        <authorList>
            <person name="Yoshimi A."/>
            <person name="Yamaguchi S."/>
            <person name="Fujioka T."/>
            <person name="Kawai K."/>
            <person name="Gomi K."/>
            <person name="Machida M."/>
            <person name="Abe K."/>
        </authorList>
    </citation>
    <scope>NUCLEOTIDE SEQUENCE [GENOMIC DNA]</scope>
    <scope>FUNCTION</scope>
    <scope>PATHWAY</scope>
    <source>
        <strain>BAUA-2787</strain>
    </source>
</reference>
<reference key="2">
    <citation type="journal article" date="2022" name="Front. Fungal Biol.">
        <title>Discovery of a gene cluster for the biosynthesis of novel cyclic peptide compound, KK-1, in Curvularia clavata.</title>
        <authorList>
            <person name="Yamaguchi S."/>
            <person name="Fujioka T."/>
            <person name="Yoshimi A."/>
            <person name="Kumagai T."/>
            <person name="Umemura M."/>
            <person name="Abe K."/>
            <person name="Machida M."/>
            <person name="Kawai K."/>
        </authorList>
    </citation>
    <scope>FUNCTION</scope>
    <scope>INDUCTION</scope>
    <scope>DISRUPTION PHENOTYPE</scope>
    <scope>PATHWAY</scope>
</reference>